<evidence type="ECO:0000250" key="1">
    <source>
        <dbReference type="UniProtKB" id="O60931"/>
    </source>
</evidence>
<evidence type="ECO:0000255" key="2"/>
<evidence type="ECO:0000255" key="3">
    <source>
        <dbReference type="PROSITE-ProRule" id="PRU00498"/>
    </source>
</evidence>
<evidence type="ECO:0000256" key="4">
    <source>
        <dbReference type="SAM" id="MobiDB-lite"/>
    </source>
</evidence>
<evidence type="ECO:0000269" key="5">
    <source>
    </source>
</evidence>
<evidence type="ECO:0000269" key="6">
    <source>
    </source>
</evidence>
<evidence type="ECO:0000303" key="7">
    <source>
    </source>
</evidence>
<evidence type="ECO:0000305" key="8"/>
<evidence type="ECO:0000312" key="9">
    <source>
        <dbReference type="FlyBase" id="FBgn0039045"/>
    </source>
</evidence>
<evidence type="ECO:0000312" key="10">
    <source>
        <dbReference type="Proteomes" id="UP000000803"/>
    </source>
</evidence>
<gene>
    <name evidence="9" type="primary">Ctns</name>
    <name evidence="9" type="ORF">CG17119</name>
</gene>
<name>CTNS_DROME</name>
<organism evidence="10">
    <name type="scientific">Drosophila melanogaster</name>
    <name type="common">Fruit fly</name>
    <dbReference type="NCBI Taxonomy" id="7227"/>
    <lineage>
        <taxon>Eukaryota</taxon>
        <taxon>Metazoa</taxon>
        <taxon>Ecdysozoa</taxon>
        <taxon>Arthropoda</taxon>
        <taxon>Hexapoda</taxon>
        <taxon>Insecta</taxon>
        <taxon>Pterygota</taxon>
        <taxon>Neoptera</taxon>
        <taxon>Endopterygota</taxon>
        <taxon>Diptera</taxon>
        <taxon>Brachycera</taxon>
        <taxon>Muscomorpha</taxon>
        <taxon>Ephydroidea</taxon>
        <taxon>Drosophilidae</taxon>
        <taxon>Drosophila</taxon>
        <taxon>Sophophora</taxon>
    </lineage>
</organism>
<keyword id="KW-0325">Glycoprotein</keyword>
<keyword id="KW-0458">Lysosome</keyword>
<keyword id="KW-0472">Membrane</keyword>
<keyword id="KW-1185">Reference proteome</keyword>
<keyword id="KW-0677">Repeat</keyword>
<keyword id="KW-0732">Signal</keyword>
<keyword id="KW-0769">Symport</keyword>
<keyword id="KW-0812">Transmembrane</keyword>
<keyword id="KW-1133">Transmembrane helix</keyword>
<keyword id="KW-0813">Transport</keyword>
<proteinExistence type="evidence at protein level"/>
<reference key="1">
    <citation type="journal article" date="2000" name="Science">
        <title>The genome sequence of Drosophila melanogaster.</title>
        <authorList>
            <person name="Adams M.D."/>
            <person name="Celniker S.E."/>
            <person name="Holt R.A."/>
            <person name="Evans C.A."/>
            <person name="Gocayne J.D."/>
            <person name="Amanatides P.G."/>
            <person name="Scherer S.E."/>
            <person name="Li P.W."/>
            <person name="Hoskins R.A."/>
            <person name="Galle R.F."/>
            <person name="George R.A."/>
            <person name="Lewis S.E."/>
            <person name="Richards S."/>
            <person name="Ashburner M."/>
            <person name="Henderson S.N."/>
            <person name="Sutton G.G."/>
            <person name="Wortman J.R."/>
            <person name="Yandell M.D."/>
            <person name="Zhang Q."/>
            <person name="Chen L.X."/>
            <person name="Brandon R.C."/>
            <person name="Rogers Y.-H.C."/>
            <person name="Blazej R.G."/>
            <person name="Champe M."/>
            <person name="Pfeiffer B.D."/>
            <person name="Wan K.H."/>
            <person name="Doyle C."/>
            <person name="Baxter E.G."/>
            <person name="Helt G."/>
            <person name="Nelson C.R."/>
            <person name="Miklos G.L.G."/>
            <person name="Abril J.F."/>
            <person name="Agbayani A."/>
            <person name="An H.-J."/>
            <person name="Andrews-Pfannkoch C."/>
            <person name="Baldwin D."/>
            <person name="Ballew R.M."/>
            <person name="Basu A."/>
            <person name="Baxendale J."/>
            <person name="Bayraktaroglu L."/>
            <person name="Beasley E.M."/>
            <person name="Beeson K.Y."/>
            <person name="Benos P.V."/>
            <person name="Berman B.P."/>
            <person name="Bhandari D."/>
            <person name="Bolshakov S."/>
            <person name="Borkova D."/>
            <person name="Botchan M.R."/>
            <person name="Bouck J."/>
            <person name="Brokstein P."/>
            <person name="Brottier P."/>
            <person name="Burtis K.C."/>
            <person name="Busam D.A."/>
            <person name="Butler H."/>
            <person name="Cadieu E."/>
            <person name="Center A."/>
            <person name="Chandra I."/>
            <person name="Cherry J.M."/>
            <person name="Cawley S."/>
            <person name="Dahlke C."/>
            <person name="Davenport L.B."/>
            <person name="Davies P."/>
            <person name="de Pablos B."/>
            <person name="Delcher A."/>
            <person name="Deng Z."/>
            <person name="Mays A.D."/>
            <person name="Dew I."/>
            <person name="Dietz S.M."/>
            <person name="Dodson K."/>
            <person name="Doup L.E."/>
            <person name="Downes M."/>
            <person name="Dugan-Rocha S."/>
            <person name="Dunkov B.C."/>
            <person name="Dunn P."/>
            <person name="Durbin K.J."/>
            <person name="Evangelista C.C."/>
            <person name="Ferraz C."/>
            <person name="Ferriera S."/>
            <person name="Fleischmann W."/>
            <person name="Fosler C."/>
            <person name="Gabrielian A.E."/>
            <person name="Garg N.S."/>
            <person name="Gelbart W.M."/>
            <person name="Glasser K."/>
            <person name="Glodek A."/>
            <person name="Gong F."/>
            <person name="Gorrell J.H."/>
            <person name="Gu Z."/>
            <person name="Guan P."/>
            <person name="Harris M."/>
            <person name="Harris N.L."/>
            <person name="Harvey D.A."/>
            <person name="Heiman T.J."/>
            <person name="Hernandez J.R."/>
            <person name="Houck J."/>
            <person name="Hostin D."/>
            <person name="Houston K.A."/>
            <person name="Howland T.J."/>
            <person name="Wei M.-H."/>
            <person name="Ibegwam C."/>
            <person name="Jalali M."/>
            <person name="Kalush F."/>
            <person name="Karpen G.H."/>
            <person name="Ke Z."/>
            <person name="Kennison J.A."/>
            <person name="Ketchum K.A."/>
            <person name="Kimmel B.E."/>
            <person name="Kodira C.D."/>
            <person name="Kraft C.L."/>
            <person name="Kravitz S."/>
            <person name="Kulp D."/>
            <person name="Lai Z."/>
            <person name="Lasko P."/>
            <person name="Lei Y."/>
            <person name="Levitsky A.A."/>
            <person name="Li J.H."/>
            <person name="Li Z."/>
            <person name="Liang Y."/>
            <person name="Lin X."/>
            <person name="Liu X."/>
            <person name="Mattei B."/>
            <person name="McIntosh T.C."/>
            <person name="McLeod M.P."/>
            <person name="McPherson D."/>
            <person name="Merkulov G."/>
            <person name="Milshina N.V."/>
            <person name="Mobarry C."/>
            <person name="Morris J."/>
            <person name="Moshrefi A."/>
            <person name="Mount S.M."/>
            <person name="Moy M."/>
            <person name="Murphy B."/>
            <person name="Murphy L."/>
            <person name="Muzny D.M."/>
            <person name="Nelson D.L."/>
            <person name="Nelson D.R."/>
            <person name="Nelson K.A."/>
            <person name="Nixon K."/>
            <person name="Nusskern D.R."/>
            <person name="Pacleb J.M."/>
            <person name="Palazzolo M."/>
            <person name="Pittman G.S."/>
            <person name="Pan S."/>
            <person name="Pollard J."/>
            <person name="Puri V."/>
            <person name="Reese M.G."/>
            <person name="Reinert K."/>
            <person name="Remington K."/>
            <person name="Saunders R.D.C."/>
            <person name="Scheeler F."/>
            <person name="Shen H."/>
            <person name="Shue B.C."/>
            <person name="Siden-Kiamos I."/>
            <person name="Simpson M."/>
            <person name="Skupski M.P."/>
            <person name="Smith T.J."/>
            <person name="Spier E."/>
            <person name="Spradling A.C."/>
            <person name="Stapleton M."/>
            <person name="Strong R."/>
            <person name="Sun E."/>
            <person name="Svirskas R."/>
            <person name="Tector C."/>
            <person name="Turner R."/>
            <person name="Venter E."/>
            <person name="Wang A.H."/>
            <person name="Wang X."/>
            <person name="Wang Z.-Y."/>
            <person name="Wassarman D.A."/>
            <person name="Weinstock G.M."/>
            <person name="Weissenbach J."/>
            <person name="Williams S.M."/>
            <person name="Woodage T."/>
            <person name="Worley K.C."/>
            <person name="Wu D."/>
            <person name="Yang S."/>
            <person name="Yao Q.A."/>
            <person name="Ye J."/>
            <person name="Yeh R.-F."/>
            <person name="Zaveri J.S."/>
            <person name="Zhan M."/>
            <person name="Zhang G."/>
            <person name="Zhao Q."/>
            <person name="Zheng L."/>
            <person name="Zheng X.H."/>
            <person name="Zhong F.N."/>
            <person name="Zhong W."/>
            <person name="Zhou X."/>
            <person name="Zhu S.C."/>
            <person name="Zhu X."/>
            <person name="Smith H.O."/>
            <person name="Gibbs R.A."/>
            <person name="Myers E.W."/>
            <person name="Rubin G.M."/>
            <person name="Venter J.C."/>
        </authorList>
    </citation>
    <scope>NUCLEOTIDE SEQUENCE [LARGE SCALE GENOMIC DNA]</scope>
    <source>
        <strain>Berkeley</strain>
    </source>
</reference>
<reference key="2">
    <citation type="journal article" date="2002" name="Genome Biol.">
        <title>Annotation of the Drosophila melanogaster euchromatic genome: a systematic review.</title>
        <authorList>
            <person name="Misra S."/>
            <person name="Crosby M.A."/>
            <person name="Mungall C.J."/>
            <person name="Matthews B.B."/>
            <person name="Campbell K.S."/>
            <person name="Hradecky P."/>
            <person name="Huang Y."/>
            <person name="Kaminker J.S."/>
            <person name="Millburn G.H."/>
            <person name="Prochnik S.E."/>
            <person name="Smith C.D."/>
            <person name="Tupy J.L."/>
            <person name="Whitfield E.J."/>
            <person name="Bayraktaroglu L."/>
            <person name="Berman B.P."/>
            <person name="Bettencourt B.R."/>
            <person name="Celniker S.E."/>
            <person name="de Grey A.D.N.J."/>
            <person name="Drysdale R.A."/>
            <person name="Harris N.L."/>
            <person name="Richter J."/>
            <person name="Russo S."/>
            <person name="Schroeder A.J."/>
            <person name="Shu S.Q."/>
            <person name="Stapleton M."/>
            <person name="Yamada C."/>
            <person name="Ashburner M."/>
            <person name="Gelbart W.M."/>
            <person name="Rubin G.M."/>
            <person name="Lewis S.E."/>
        </authorList>
    </citation>
    <scope>GENOME REANNOTATION</scope>
    <source>
        <strain>Berkeley</strain>
    </source>
</reference>
<reference key="3">
    <citation type="journal article" date="2002" name="Genome Biol.">
        <title>A Drosophila full-length cDNA resource.</title>
        <authorList>
            <person name="Stapleton M."/>
            <person name="Carlson J.W."/>
            <person name="Brokstein P."/>
            <person name="Yu C."/>
            <person name="Champe M."/>
            <person name="George R.A."/>
            <person name="Guarin H."/>
            <person name="Kronmiller B."/>
            <person name="Pacleb J.M."/>
            <person name="Park S."/>
            <person name="Wan K.H."/>
            <person name="Rubin G.M."/>
            <person name="Celniker S.E."/>
        </authorList>
    </citation>
    <scope>NUCLEOTIDE SEQUENCE [LARGE SCALE MRNA]</scope>
    <source>
        <strain>Berkeley</strain>
        <tissue>Larva</tissue>
        <tissue>Pupae</tissue>
    </source>
</reference>
<reference key="4">
    <citation type="journal article" date="2007" name="Glycobiology">
        <title>Identification of N-glycosylated proteins from the central nervous system of Drosophila melanogaster.</title>
        <authorList>
            <person name="Koles K."/>
            <person name="Lim J.-M."/>
            <person name="Aoki K."/>
            <person name="Porterfield M."/>
            <person name="Tiemeyer M."/>
            <person name="Wells L."/>
            <person name="Panin V."/>
        </authorList>
    </citation>
    <scope>GLYCOSYLATION [LARGE SCALE ANALYSIS] AT ASN-86</scope>
    <scope>IDENTIFICATION BY MASS SPECTROMETRY</scope>
    <source>
        <strain>Oregon-R</strain>
        <tissue>Head</tissue>
    </source>
</reference>
<reference key="5">
    <citation type="journal article" date="2022" name="Science">
        <title>Lysosomal cystine mobilization shapes the response of TORC1 and tissue growth to fasting.</title>
        <authorList>
            <person name="Jouandin P."/>
            <person name="Marelja Z."/>
            <person name="Shih Y.H."/>
            <person name="Parkhitko A.A."/>
            <person name="Dambowsky M."/>
            <person name="Asara J.M."/>
            <person name="Nemazanyy I."/>
            <person name="Dibble C.C."/>
            <person name="Simons M."/>
            <person name="Perrimon N."/>
        </authorList>
    </citation>
    <scope>FUNCTION</scope>
    <scope>DISRUPTION PHENOTYPE</scope>
</reference>
<accession>Q9VCR7</accession>
<accession>Q7YZ90</accession>
<accession>Q8MS51</accession>
<sequence length="397" mass="44588">MDFSTHRLTTLLLLLLATVALGNAQSSQLTVDSHDITVLLNSNETFLVFANGLLDSDVEVALGTDSEDHLLLDPATFVYPAGSTRNQSVVITGLKAGNVKVVADSDDANKEIVKDVFVRVTVAKSRALIYTSIIFGWVYFVAWSVSFYPQIWSNYRRKSVEGLNFDFLALNIVGFTLYSMFNCGLYFIEDLQNEYEVRYPLGVNPVMLNDVVFSLHAMFATCITILQCFFYQRAQQRVSFIAYGILAIFAVVVVVSAGLAGGSVIHWLDFLYYCSYVKLTITIIKYVPQALMNYRRKSTSGWSIGNILLDFTGGTLSMLQMILNAHNYDDWVSIFGDPTKFGLGLFSVLFDVFFMLQHYVFYRHSRESSSSDLTTVTDVQNRTNESPPPSEVTTEKY</sequence>
<comment type="function">
    <text evidence="6">Cystine/H(+) symporter that mediates export of cystine, the oxidized dimer of cysteine, from lysosomes (PubMed:35175796). Involved in cysteine homeostasis during periods of fasting, which indirectly regulates mTORC1-mediated signaling by supporting de novo CoA synthesis, the TCA cycle and amino acid metabolism during periods of food shortage (PubMed:35175796). Important for maintaining autophagy, and for development and survival during periods of fasting (PubMed:35175796).</text>
</comment>
<comment type="catalytic activity">
    <reaction evidence="1">
        <text>L-cystine(out) + H(+)(out) = L-cystine(in) + H(+)(in)</text>
        <dbReference type="Rhea" id="RHEA:66172"/>
        <dbReference type="ChEBI" id="CHEBI:15378"/>
        <dbReference type="ChEBI" id="CHEBI:35491"/>
    </reaction>
    <physiologicalReaction direction="left-to-right" evidence="1">
        <dbReference type="Rhea" id="RHEA:66173"/>
    </physiologicalReaction>
</comment>
<comment type="subcellular location">
    <subcellularLocation>
        <location evidence="1">Lysosome membrane</location>
        <topology evidence="2">Multi-pass membrane protein</topology>
    </subcellularLocation>
</comment>
<comment type="disruption phenotype">
    <text evidence="6">No effect on adult lifespan but larvae show a developmental delay (PubMed:35175796). The larval developmental delay is more severe when raised on a low-protein diet and adults die more quickly of starvation (PubMed:35175796). Accumulation of cystine in larvae (PubMed:35175796). Under fed conditions no difference in larval cysteine levels, however cysteine levels are reduced in fasting larvae (PubMed:35175796). Conditional RNAi-mediated knockdown in the fat body causes a developmental delay when on a low-protein diet (PubMed:35175796).</text>
</comment>
<comment type="similarity">
    <text evidence="8">Belongs to the cystinosin family.</text>
</comment>
<dbReference type="EMBL" id="AE014297">
    <property type="protein sequence ID" value="AAF56088.2"/>
    <property type="molecule type" value="Genomic_DNA"/>
</dbReference>
<dbReference type="EMBL" id="AE014297">
    <property type="protein sequence ID" value="AAO41592.2"/>
    <property type="molecule type" value="Genomic_DNA"/>
</dbReference>
<dbReference type="EMBL" id="AY119096">
    <property type="protein sequence ID" value="AAM50956.1"/>
    <property type="molecule type" value="mRNA"/>
</dbReference>
<dbReference type="RefSeq" id="NP_651116.1">
    <property type="nucleotide sequence ID" value="NM_142859.3"/>
</dbReference>
<dbReference type="RefSeq" id="NP_788720.2">
    <property type="nucleotide sequence ID" value="NM_176543.2"/>
</dbReference>
<dbReference type="SMR" id="Q9VCR7"/>
<dbReference type="FunCoup" id="Q9VCR7">
    <property type="interactions" value="460"/>
</dbReference>
<dbReference type="STRING" id="7227.FBpp0083750"/>
<dbReference type="TCDB" id="2.A.43.1.2">
    <property type="family name" value="the lysosomal cystine transporter (lct) family"/>
</dbReference>
<dbReference type="GlyGen" id="Q9VCR7">
    <property type="glycosylation" value="4 sites, 1 O-linked glycan (1 site)"/>
</dbReference>
<dbReference type="iPTMnet" id="Q9VCR7"/>
<dbReference type="PaxDb" id="7227-FBpp0083750"/>
<dbReference type="DNASU" id="42723"/>
<dbReference type="EnsemblMetazoa" id="FBtr0084357">
    <property type="protein sequence ID" value="FBpp0083750"/>
    <property type="gene ID" value="FBgn0039045"/>
</dbReference>
<dbReference type="EnsemblMetazoa" id="FBtr0344299">
    <property type="protein sequence ID" value="FBpp0310702"/>
    <property type="gene ID" value="FBgn0039045"/>
</dbReference>
<dbReference type="GeneID" id="42723"/>
<dbReference type="KEGG" id="dme:Dmel_CG17119"/>
<dbReference type="UCSC" id="CG17119-RA">
    <property type="organism name" value="d. melanogaster"/>
</dbReference>
<dbReference type="AGR" id="FB:FBgn0039045"/>
<dbReference type="CTD" id="1497"/>
<dbReference type="FlyBase" id="FBgn0039045">
    <property type="gene designation" value="Ctns"/>
</dbReference>
<dbReference type="VEuPathDB" id="VectorBase:FBgn0039045"/>
<dbReference type="eggNOG" id="KOG3145">
    <property type="taxonomic scope" value="Eukaryota"/>
</dbReference>
<dbReference type="GeneTree" id="ENSGT00390000005338"/>
<dbReference type="HOGENOM" id="CLU_046327_1_1_1"/>
<dbReference type="InParanoid" id="Q9VCR7"/>
<dbReference type="OMA" id="WIDVIYT"/>
<dbReference type="OrthoDB" id="75720at2759"/>
<dbReference type="PhylomeDB" id="Q9VCR7"/>
<dbReference type="Reactome" id="R-DME-425393">
    <property type="pathway name" value="Transport of inorganic cations/anions and amino acids/oligopeptides"/>
</dbReference>
<dbReference type="Reactome" id="R-DME-5223345">
    <property type="pathway name" value="Miscellaneous transport and binding events"/>
</dbReference>
<dbReference type="BioGRID-ORCS" id="42723">
    <property type="hits" value="0 hits in 3 CRISPR screens"/>
</dbReference>
<dbReference type="GenomeRNAi" id="42723"/>
<dbReference type="PRO" id="PR:Q9VCR7"/>
<dbReference type="Proteomes" id="UP000000803">
    <property type="component" value="Chromosome 3R"/>
</dbReference>
<dbReference type="Bgee" id="FBgn0039045">
    <property type="expression patterns" value="Expressed in adult Malpighian tubule (Drosophila) and 42 other cell types or tissues"/>
</dbReference>
<dbReference type="ExpressionAtlas" id="Q9VCR7">
    <property type="expression patterns" value="baseline and differential"/>
</dbReference>
<dbReference type="GO" id="GO:0005765">
    <property type="term" value="C:lysosomal membrane"/>
    <property type="evidence" value="ECO:0000250"/>
    <property type="project" value="FlyBase"/>
</dbReference>
<dbReference type="GO" id="GO:0015171">
    <property type="term" value="F:amino acid transmembrane transporter activity"/>
    <property type="evidence" value="ECO:0000250"/>
    <property type="project" value="FlyBase"/>
</dbReference>
<dbReference type="GO" id="GO:0015184">
    <property type="term" value="F:L-cystine transmembrane transporter activity"/>
    <property type="evidence" value="ECO:0000315"/>
    <property type="project" value="UniProtKB"/>
</dbReference>
<dbReference type="GO" id="GO:0015293">
    <property type="term" value="F:symporter activity"/>
    <property type="evidence" value="ECO:0007669"/>
    <property type="project" value="UniProtKB-KW"/>
</dbReference>
<dbReference type="GO" id="GO:0003333">
    <property type="term" value="P:amino acid transmembrane transport"/>
    <property type="evidence" value="ECO:0000250"/>
    <property type="project" value="FlyBase"/>
</dbReference>
<dbReference type="GO" id="GO:0015811">
    <property type="term" value="P:L-cystine transport"/>
    <property type="evidence" value="ECO:0000250"/>
    <property type="project" value="FlyBase"/>
</dbReference>
<dbReference type="FunFam" id="1.20.1280.290:FF:000016">
    <property type="entry name" value="Cystinosin homolog"/>
    <property type="match status" value="1"/>
</dbReference>
<dbReference type="FunFam" id="1.20.1280.290:FF:000022">
    <property type="entry name" value="Cystinosin homolog"/>
    <property type="match status" value="1"/>
</dbReference>
<dbReference type="Gene3D" id="1.20.1280.290">
    <property type="match status" value="2"/>
</dbReference>
<dbReference type="InterPro" id="IPR005282">
    <property type="entry name" value="LC_transporter"/>
</dbReference>
<dbReference type="InterPro" id="IPR006603">
    <property type="entry name" value="PQ-loop_rpt"/>
</dbReference>
<dbReference type="InterPro" id="IPR010916">
    <property type="entry name" value="TonB_box_CS"/>
</dbReference>
<dbReference type="NCBIfam" id="TIGR00951">
    <property type="entry name" value="2A43"/>
    <property type="match status" value="1"/>
</dbReference>
<dbReference type="PANTHER" id="PTHR13131">
    <property type="entry name" value="CYSTINOSIN"/>
    <property type="match status" value="1"/>
</dbReference>
<dbReference type="PANTHER" id="PTHR13131:SF5">
    <property type="entry name" value="CYSTINOSIN"/>
    <property type="match status" value="1"/>
</dbReference>
<dbReference type="Pfam" id="PF04193">
    <property type="entry name" value="PQ-loop"/>
    <property type="match status" value="2"/>
</dbReference>
<dbReference type="SMART" id="SM00679">
    <property type="entry name" value="CTNS"/>
    <property type="match status" value="2"/>
</dbReference>
<feature type="signal peptide" evidence="2">
    <location>
        <begin position="1"/>
        <end position="24"/>
    </location>
</feature>
<feature type="chain" id="PRO_0000205517" description="Cystinosin" evidence="2">
    <location>
        <begin position="25"/>
        <end position="397"/>
    </location>
</feature>
<feature type="topological domain" description="Lumenal" evidence="8">
    <location>
        <begin position="25"/>
        <end position="126"/>
    </location>
</feature>
<feature type="transmembrane region" description="Helical" evidence="2">
    <location>
        <begin position="127"/>
        <end position="147"/>
    </location>
</feature>
<feature type="topological domain" description="Cytoplasmic" evidence="8">
    <location>
        <begin position="148"/>
        <end position="167"/>
    </location>
</feature>
<feature type="transmembrane region" description="Helical" evidence="2">
    <location>
        <begin position="168"/>
        <end position="188"/>
    </location>
</feature>
<feature type="topological domain" description="Lumenal" evidence="8">
    <location>
        <begin position="189"/>
        <end position="210"/>
    </location>
</feature>
<feature type="transmembrane region" description="Helical" evidence="2">
    <location>
        <begin position="211"/>
        <end position="231"/>
    </location>
</feature>
<feature type="topological domain" description="Cytoplasmic" evidence="8">
    <location>
        <begin position="232"/>
        <end position="239"/>
    </location>
</feature>
<feature type="transmembrane region" description="Helical" evidence="2">
    <location>
        <begin position="240"/>
        <end position="260"/>
    </location>
</feature>
<feature type="topological domain" description="Lumenal" evidence="8">
    <location>
        <begin position="261"/>
        <end position="263"/>
    </location>
</feature>
<feature type="transmembrane region" description="Helical" evidence="2">
    <location>
        <begin position="264"/>
        <end position="284"/>
    </location>
</feature>
<feature type="topological domain" description="Cytoplasmic" evidence="8">
    <location>
        <begin position="285"/>
        <end position="302"/>
    </location>
</feature>
<feature type="transmembrane region" description="Helical" evidence="2">
    <location>
        <begin position="303"/>
        <end position="323"/>
    </location>
</feature>
<feature type="topological domain" description="Lumenal" evidence="8">
    <location>
        <begin position="324"/>
        <end position="340"/>
    </location>
</feature>
<feature type="transmembrane region" description="Helical" evidence="2">
    <location>
        <begin position="341"/>
        <end position="361"/>
    </location>
</feature>
<feature type="topological domain" description="Cytoplasmic" evidence="8">
    <location>
        <begin position="362"/>
        <end position="397"/>
    </location>
</feature>
<feature type="domain" description="PQ-loop 1" evidence="2">
    <location>
        <begin position="132"/>
        <end position="187"/>
    </location>
</feature>
<feature type="domain" description="PQ-loop 2" evidence="2">
    <location>
        <begin position="271"/>
        <end position="327"/>
    </location>
</feature>
<feature type="region of interest" description="Disordered" evidence="4">
    <location>
        <begin position="373"/>
        <end position="397"/>
    </location>
</feature>
<feature type="compositionally biased region" description="Polar residues" evidence="4">
    <location>
        <begin position="373"/>
        <end position="385"/>
    </location>
</feature>
<feature type="glycosylation site" description="N-linked (GlcNAc...) asparagine" evidence="3">
    <location>
        <position position="43"/>
    </location>
</feature>
<feature type="glycosylation site" description="N-linked (GlcNAc...) asparagine" evidence="5">
    <location>
        <position position="86"/>
    </location>
</feature>
<protein>
    <recommendedName>
        <fullName evidence="9">Cystinosin</fullName>
        <shortName evidence="7">dCTNS</shortName>
    </recommendedName>
</protein>